<name>SELA_PASMU</name>
<protein>
    <recommendedName>
        <fullName evidence="1">L-seryl-tRNA(Sec) selenium transferase</fullName>
        <ecNumber evidence="1">2.9.1.1</ecNumber>
    </recommendedName>
    <alternativeName>
        <fullName evidence="1">Selenocysteine synthase</fullName>
        <shortName evidence="1">Sec synthase</shortName>
    </alternativeName>
    <alternativeName>
        <fullName evidence="1">Selenocysteinyl-tRNA(Sec) synthase</fullName>
    </alternativeName>
</protein>
<reference key="1">
    <citation type="journal article" date="2001" name="Proc. Natl. Acad. Sci. U.S.A.">
        <title>Complete genomic sequence of Pasteurella multocida Pm70.</title>
        <authorList>
            <person name="May B.J."/>
            <person name="Zhang Q."/>
            <person name="Li L.L."/>
            <person name="Paustian M.L."/>
            <person name="Whittam T.S."/>
            <person name="Kapur V."/>
        </authorList>
    </citation>
    <scope>NUCLEOTIDE SEQUENCE [LARGE SCALE GENOMIC DNA]</scope>
    <source>
        <strain>Pm70</strain>
    </source>
</reference>
<evidence type="ECO:0000255" key="1">
    <source>
        <dbReference type="HAMAP-Rule" id="MF_00423"/>
    </source>
</evidence>
<organism>
    <name type="scientific">Pasteurella multocida (strain Pm70)</name>
    <dbReference type="NCBI Taxonomy" id="272843"/>
    <lineage>
        <taxon>Bacteria</taxon>
        <taxon>Pseudomonadati</taxon>
        <taxon>Pseudomonadota</taxon>
        <taxon>Gammaproteobacteria</taxon>
        <taxon>Pasteurellales</taxon>
        <taxon>Pasteurellaceae</taxon>
        <taxon>Pasteurella</taxon>
    </lineage>
</organism>
<keyword id="KW-0963">Cytoplasm</keyword>
<keyword id="KW-0648">Protein biosynthesis</keyword>
<keyword id="KW-0663">Pyridoxal phosphate</keyword>
<keyword id="KW-1185">Reference proteome</keyword>
<keyword id="KW-0711">Selenium</keyword>
<keyword id="KW-0808">Transferase</keyword>
<dbReference type="EC" id="2.9.1.1" evidence="1"/>
<dbReference type="EMBL" id="AE004439">
    <property type="protein sequence ID" value="AAK03852.1"/>
    <property type="molecule type" value="Genomic_DNA"/>
</dbReference>
<dbReference type="RefSeq" id="WP_010907322.1">
    <property type="nucleotide sequence ID" value="NC_002663.1"/>
</dbReference>
<dbReference type="SMR" id="Q9CK66"/>
<dbReference type="STRING" id="272843.PM1768"/>
<dbReference type="EnsemblBacteria" id="AAK03852">
    <property type="protein sequence ID" value="AAK03852"/>
    <property type="gene ID" value="PM1768"/>
</dbReference>
<dbReference type="KEGG" id="pmu:PM1768"/>
<dbReference type="PATRIC" id="fig|272843.6.peg.1790"/>
<dbReference type="HOGENOM" id="CLU_038142_1_0_6"/>
<dbReference type="OrthoDB" id="9787096at2"/>
<dbReference type="UniPathway" id="UPA00906">
    <property type="reaction ID" value="UER00896"/>
</dbReference>
<dbReference type="Proteomes" id="UP000000809">
    <property type="component" value="Chromosome"/>
</dbReference>
<dbReference type="GO" id="GO:0005737">
    <property type="term" value="C:cytoplasm"/>
    <property type="evidence" value="ECO:0007669"/>
    <property type="project" value="UniProtKB-SubCell"/>
</dbReference>
<dbReference type="GO" id="GO:0004125">
    <property type="term" value="F:L-seryl-tRNA(Sec) selenium transferase activity"/>
    <property type="evidence" value="ECO:0007669"/>
    <property type="project" value="UniProtKB-UniRule"/>
</dbReference>
<dbReference type="GO" id="GO:0001717">
    <property type="term" value="P:conversion of seryl-tRNAsec to selenocys-tRNAsec"/>
    <property type="evidence" value="ECO:0007669"/>
    <property type="project" value="UniProtKB-UniRule"/>
</dbReference>
<dbReference type="GO" id="GO:0001514">
    <property type="term" value="P:selenocysteine incorporation"/>
    <property type="evidence" value="ECO:0007669"/>
    <property type="project" value="UniProtKB-UniRule"/>
</dbReference>
<dbReference type="FunFam" id="3.40.640.10:FF:000028">
    <property type="entry name" value="L-seryl-tRNA(Sec) selenium transferase"/>
    <property type="match status" value="1"/>
</dbReference>
<dbReference type="Gene3D" id="3.90.1150.180">
    <property type="match status" value="1"/>
</dbReference>
<dbReference type="Gene3D" id="3.40.640.10">
    <property type="entry name" value="Type I PLP-dependent aspartate aminotransferase-like (Major domain)"/>
    <property type="match status" value="1"/>
</dbReference>
<dbReference type="HAMAP" id="MF_00423">
    <property type="entry name" value="SelA"/>
    <property type="match status" value="1"/>
</dbReference>
<dbReference type="InterPro" id="IPR015424">
    <property type="entry name" value="PyrdxlP-dep_Trfase"/>
</dbReference>
<dbReference type="InterPro" id="IPR015421">
    <property type="entry name" value="PyrdxlP-dep_Trfase_major"/>
</dbReference>
<dbReference type="InterPro" id="IPR018319">
    <property type="entry name" value="SelA-like"/>
</dbReference>
<dbReference type="InterPro" id="IPR004534">
    <property type="entry name" value="SelA_trans"/>
</dbReference>
<dbReference type="InterPro" id="IPR025862">
    <property type="entry name" value="SelA_trans_N_dom"/>
</dbReference>
<dbReference type="NCBIfam" id="TIGR00474">
    <property type="entry name" value="selA"/>
    <property type="match status" value="1"/>
</dbReference>
<dbReference type="PANTHER" id="PTHR32328">
    <property type="entry name" value="L-SERYL-TRNA(SEC) SELENIUM TRANSFERASE"/>
    <property type="match status" value="1"/>
</dbReference>
<dbReference type="PANTHER" id="PTHR32328:SF0">
    <property type="entry name" value="L-SERYL-TRNA(SEC) SELENIUM TRANSFERASE"/>
    <property type="match status" value="1"/>
</dbReference>
<dbReference type="Pfam" id="PF12390">
    <property type="entry name" value="Se-cys_synth_N"/>
    <property type="match status" value="1"/>
</dbReference>
<dbReference type="Pfam" id="PF03841">
    <property type="entry name" value="SelA"/>
    <property type="match status" value="1"/>
</dbReference>
<dbReference type="SUPFAM" id="SSF53383">
    <property type="entry name" value="PLP-dependent transferases"/>
    <property type="match status" value="1"/>
</dbReference>
<comment type="function">
    <text evidence="1">Converts seryl-tRNA(Sec) to selenocysteinyl-tRNA(Sec) required for selenoprotein biosynthesis.</text>
</comment>
<comment type="catalytic activity">
    <reaction evidence="1">
        <text>L-seryl-tRNA(Sec) + selenophosphate + H(+) = L-selenocysteinyl-tRNA(Sec) + phosphate</text>
        <dbReference type="Rhea" id="RHEA:22728"/>
        <dbReference type="Rhea" id="RHEA-COMP:9742"/>
        <dbReference type="Rhea" id="RHEA-COMP:9743"/>
        <dbReference type="ChEBI" id="CHEBI:15378"/>
        <dbReference type="ChEBI" id="CHEBI:16144"/>
        <dbReference type="ChEBI" id="CHEBI:43474"/>
        <dbReference type="ChEBI" id="CHEBI:78533"/>
        <dbReference type="ChEBI" id="CHEBI:78573"/>
        <dbReference type="EC" id="2.9.1.1"/>
    </reaction>
</comment>
<comment type="cofactor">
    <cofactor evidence="1">
        <name>pyridoxal 5'-phosphate</name>
        <dbReference type="ChEBI" id="CHEBI:597326"/>
    </cofactor>
</comment>
<comment type="pathway">
    <text evidence="1">Aminoacyl-tRNA biosynthesis; selenocysteinyl-tRNA(Sec) biosynthesis; selenocysteinyl-tRNA(Sec) from L-seryl-tRNA(Sec) (bacterial route): step 1/1.</text>
</comment>
<comment type="subcellular location">
    <subcellularLocation>
        <location evidence="1">Cytoplasm</location>
    </subcellularLocation>
</comment>
<comment type="similarity">
    <text evidence="1">Belongs to the SelA family.</text>
</comment>
<accession>Q9CK66</accession>
<proteinExistence type="inferred from homology"/>
<feature type="chain" id="PRO_0000189610" description="L-seryl-tRNA(Sec) selenium transferase">
    <location>
        <begin position="1"/>
        <end position="460"/>
    </location>
</feature>
<feature type="modified residue" description="N6-(pyridoxal phosphate)lysine" evidence="1">
    <location>
        <position position="293"/>
    </location>
</feature>
<sequence>MSLYSSLPSIDKLLKTPEGARLSHEFGHTAVVNICRQLIEQGREYIKNENKLLPVFQDISDTLREIELQLHAQSQVKIQSVHNLTGTILHTNLGRALWSDAAQHAALTSMSHNVALEYDLEEGKRSHRDHYISDLLCQLTGAEAACIVNNNAAAVLLMLATFAQGKEVIISRGELIEIGGAFRIPDIMQQAGCKLVEVGTTNRTHLSDYRHAINENTAFLMKVHSSNYQICGFTKSVTEAELVTLAREFNLPVMTDLGSGALVDLAQYGLPKEPTVQEKWAQGVELISFSGDKLLGGPQAGIIVGKKAWIDRLQTHPLKRALRCDKVILAGLEATLRLYLQPEKLSQHLTTLRLLTQPVEALHEQAEQLQSVLLTKLTTDYSVAITNSVAQIGSGSQPMATIPSVAVTISTEKAGKLTALLQRFKALPQPIICRVEKEKIWLDLRGLADIDSLLKTIMQL</sequence>
<gene>
    <name evidence="1" type="primary">selA</name>
    <name type="ordered locus">PM1768</name>
</gene>